<organism>
    <name type="scientific">Pongo abelii</name>
    <name type="common">Sumatran orangutan</name>
    <name type="synonym">Pongo pygmaeus abelii</name>
    <dbReference type="NCBI Taxonomy" id="9601"/>
    <lineage>
        <taxon>Eukaryota</taxon>
        <taxon>Metazoa</taxon>
        <taxon>Chordata</taxon>
        <taxon>Craniata</taxon>
        <taxon>Vertebrata</taxon>
        <taxon>Euteleostomi</taxon>
        <taxon>Mammalia</taxon>
        <taxon>Eutheria</taxon>
        <taxon>Euarchontoglires</taxon>
        <taxon>Primates</taxon>
        <taxon>Haplorrhini</taxon>
        <taxon>Catarrhini</taxon>
        <taxon>Hominidae</taxon>
        <taxon>Pongo</taxon>
    </lineage>
</organism>
<comment type="function">
    <text evidence="2 3">Molecular chaperone implicated in a wide variety of cellular processes, including protection of the proteome from stress, folding and transport of newly synthesized polypeptides, chaperone-mediated autophagy, activation of proteolysis of misfolded proteins, formation and dissociation of protein complexes, and antigen presentation. Plays a pivotal role in the protein quality control system, ensuring the correct folding of proteins, the re-folding of misfolded proteins and controlling the targeting of proteins for subsequent degradation. This is achieved through cycles of ATP binding, ATP hydrolysis and ADP release, mediated by co-chaperones. The co-chaperones have been shown to not only regulate different steps of the ATPase cycle of HSP70, but they also have an individual specificity such that one co-chaperone may promote folding of a substrate while another may promote degradation. The affinity of HSP70 for polypeptides is regulated by its nucleotide bound state. In the ATP-bound form, it has a low affinity for substrate proteins. However, upon hydrolysis of the ATP to ADP, it undergoes a conformational change that increases its affinity for substrate proteins. HSP70 goes through repeated cycles of ATP hydrolysis and nucleotide exchange, which permits cycles of substrate binding and release. The HSP70-associated co-chaperones are of three types: J-domain co-chaperones HSP40s (stimulate ATPase hydrolysis by HSP70), the nucleotide exchange factors (NEF) such as BAG1/2/3 (facilitate conversion of HSP70 from the ADP-bound to the ATP-bound state thereby promoting substrate release), and the TPR domain chaperones such as HOPX and STUB1. Plays a critical role in mitochondrial import, delivers preproteins to the mitochondrial import receptor TOMM70. Acts as a repressor of transcriptional activation. Inhibits the transcriptional coactivator activity of CITED1 on Smad-mediated transcription. Component of the PRP19-CDC5L complex that forms an integral part of the spliceosome and is required for activating pre-mRNA splicing. May have a scaffolding role in the spliceosome assembly as it contacts all other components of the core complex. Binds bacterial lipopolysaccharide (LPS) and mediates LPS-induced inflammatory response, including TNF secretion by monocytes. Substrate recognition component in chaperone-mediated autophagy (CMA), a selective protein degradation process that mediates degradation of proteins with a -KFERQ motif: HSPA8/HSC70 specifically recognizes and binds cytosolic proteins bearing a -KFERQ motif and promotes their recruitment to the surface of the lysosome where they bind to lysosomal protein LAMP2. KFERQ motif-containing proteins are eventually transported into the lysosomal lumen where they are degraded. In conjunction with LAMP2, facilitates MHC class II presentation of cytoplasmic antigens by guiding antigens to the lysosomal membrane for interaction with LAMP2 which then elicits MHC class II presentation of peptides to the cell membrane. Participates in the ER-associated degradation (ERAD) quality control pathway in conjunction with J domain-containing co-chaperones and the E3 ligase STUB1. It is recruited to clathrin-coated vesicles through its interaction with DNAJC6 leading to activation of HSPA8/HSC70 ATPase activity and therefore uncoating of clathrin-coated vesicles (By similarity).</text>
</comment>
<comment type="catalytic activity">
    <reaction evidence="2">
        <text>ATP + H2O = ADP + phosphate + H(+)</text>
        <dbReference type="Rhea" id="RHEA:13065"/>
        <dbReference type="ChEBI" id="CHEBI:15377"/>
        <dbReference type="ChEBI" id="CHEBI:15378"/>
        <dbReference type="ChEBI" id="CHEBI:30616"/>
        <dbReference type="ChEBI" id="CHEBI:43474"/>
        <dbReference type="ChEBI" id="CHEBI:456216"/>
        <dbReference type="EC" id="3.6.4.10"/>
    </reaction>
</comment>
<comment type="subunit">
    <text evidence="2 3 4 5">Component of the chaperone-assisted selective autophagy (CASA) complex consisting of BAG3, HSPA8/HSC70, HSPB8 and STUB1/CHIP (By similarity). Identified in a IGF2BP1-dependent mRNP granule complex containing untranslated mRNAs (By similarity). Interacts with PACRG (By similarity). Interacts with HSPH1/HSP105 (By similarity). Interacts with IRAK1BP1 and BAG1 (By similarity). Interacts with DNAJC7 (By similarity). Interacts with DNAJB12 (via J domain) (By similarity). Interacts with DNAJB14 (via J domain) (By similarity). Interacts (via C-terminus) with the E3 ligase STUB1 forming a 210 kDa complex of one STUB1 and two HSPA8 molecules (By similarity). Interacts with CITED1 (via N-terminus); the interaction suppresses the association of CITED1 to p300/CBP and Smad-mediated transcription transactivation (By similarity). Component of the PRP19-CDC5L splicing complex composed of a core complex comprising a homotetramer of PRPF19, CDC5L, PLRG1 and BCAS2, and at least three less stably associated proteins CTNNBL1, CWC15 and HSPA8 (By similarity). Interacts with TRIM5 (By similarity). Part of a complex composed at least of ASH2L, EMSY, HCFC1, HSPA8, CCAR2, MATR3, MKI67, RBBP5, TUBB2A, WDR5 and ZNF335; this complex may have a histone H3-specific methyltransferase activity (By similarity). Interacts with METTL21A (By similarity). Following LPS binding, may form a complex with CXCR4, GDF5 and HSP90AA1 (By similarity). Interacts with PRKN (By similarity). Interacts with FOXP3 (By similarity). Interacts with DNAJC9 (via J domain) (By similarity). Interacts with MLLT11 (By similarity). Interacts with RNF207 (By similarity). Interacts with DNAJC21 (By similarity). Interacts with DNAJB2 (By similarity). Interacts with TTC1 (via TPR repeats) (By similarity). Interacts with SGTA (via TPR repeats) (By similarity). Interacts with HSF1 (via transactivation domain) (By similarity). Interacts with HOPX, STUB1, HSP40, HSP901, BAG2 and BAG3 (By similarity). Interacts with HSPC138 (By similarity). Interacts with ZMYND10 (By similarity). Interacts with VGF-derived peptide TLQP-21 (By similarity). Interacts with BCL2L1, GIMAP5 and MCL1; the interaction with BCL2L1 or MCL1 is impaired in the absence of GIMAP5 (By similarity). Interacts with NLPR12 (By similarity). Interacts with TTC4 (By similarity). Interacts with TOMM70; the interaction is required for preprotein mitochondrial import (By similarity). May interact with DNJC9; the interaction seems to be histone-dependent (By similarity). Interacts with BAG5 and JPH2; the interaction with JPH2 is increased in the presence of BAG5 (By similarity). Interacts with DNAJC6 (via J domain) in an ATP-dependent manner; this interaction stimulates the HSPA8's ATPase activity. Forms a complex composed of HSPA8, CLTC and DNAJC6 (By similarity). Interacts with HSPA8; this interaction modulates migratory and antigen-presenting capacities of dendritic cells (By similarity).</text>
</comment>
<comment type="subcellular location">
    <subcellularLocation>
        <location evidence="2">Cytoplasm</location>
    </subcellularLocation>
    <subcellularLocation>
        <location evidence="2">Melanosome</location>
    </subcellularLocation>
    <subcellularLocation>
        <location evidence="2">Nucleus</location>
        <location evidence="2">Nucleolus</location>
    </subcellularLocation>
    <subcellularLocation>
        <location evidence="2">Cell membrane</location>
    </subcellularLocation>
    <subcellularLocation>
        <location evidence="2">Lysosome membrane</location>
        <topology evidence="2">Peripheral membrane protein</topology>
        <orientation evidence="2">Cytoplasmic side</orientation>
    </subcellularLocation>
    <text evidence="2">Localized in cytoplasmic mRNP granules containing untranslated mRNAs. Translocates rapidly from the cytoplasm to the nuclei, and especially to the nucleoli, upon heat shock.</text>
</comment>
<comment type="induction">
    <text>Constitutively synthesized.</text>
</comment>
<comment type="domain">
    <text evidence="2">The N-terminal nucleotide binding domain (NBD) (also known as the ATPase domain) is responsible for binding and hydrolyzing ATP. The C-terminal substrate-binding domain (SBD) (also known as peptide-binding domain) binds to the client/substrate proteins. The two domains are allosterically coupled so that, when ATP is bound to the NBD, the SBD binds relatively weakly to clients. When ADP is bound in the NBD, a conformational change enhances the affinity of the SBD for client proteins.</text>
</comment>
<comment type="PTM">
    <text evidence="2">Acetylated.</text>
</comment>
<comment type="PTM">
    <text evidence="2">ISGylated.</text>
</comment>
<comment type="PTM">
    <text evidence="2">Trimethylation at Lys-561 reduces fibrillar SNCA binding.</text>
</comment>
<comment type="similarity">
    <text evidence="7">Belongs to the heat shock protein 70 family.</text>
</comment>
<protein>
    <recommendedName>
        <fullName evidence="2">Heat shock cognate 71 kDa protein</fullName>
        <ecNumber evidence="2">3.6.4.10</ecNumber>
    </recommendedName>
    <alternativeName>
        <fullName>Heat shock 70 kDa protein 8</fullName>
    </alternativeName>
</protein>
<proteinExistence type="evidence at transcript level"/>
<keyword id="KW-0007">Acetylation</keyword>
<keyword id="KW-0067">ATP-binding</keyword>
<keyword id="KW-0072">Autophagy</keyword>
<keyword id="KW-1003">Cell membrane</keyword>
<keyword id="KW-0143">Chaperone</keyword>
<keyword id="KW-0963">Cytoplasm</keyword>
<keyword id="KW-0378">Hydrolase</keyword>
<keyword id="KW-1017">Isopeptide bond</keyword>
<keyword id="KW-0458">Lysosome</keyword>
<keyword id="KW-0472">Membrane</keyword>
<keyword id="KW-0488">Methylation</keyword>
<keyword id="KW-0507">mRNA processing</keyword>
<keyword id="KW-0508">mRNA splicing</keyword>
<keyword id="KW-0547">Nucleotide-binding</keyword>
<keyword id="KW-0539">Nucleus</keyword>
<keyword id="KW-0597">Phosphoprotein</keyword>
<keyword id="KW-1185">Reference proteome</keyword>
<keyword id="KW-0747">Spliceosome</keyword>
<keyword id="KW-0346">Stress response</keyword>
<keyword id="KW-0832">Ubl conjugation</keyword>
<accession>Q5NVM9</accession>
<accession>Q5R4S8</accession>
<name>HSP7C_PONAB</name>
<gene>
    <name evidence="2" type="primary">HSPA8</name>
    <name evidence="2" type="synonym">HSC70</name>
</gene>
<feature type="initiator methionine" description="Removed" evidence="2">
    <location>
        <position position="1"/>
    </location>
</feature>
<feature type="chain" id="PRO_0000078272" description="Heat shock cognate 71 kDa protein">
    <location>
        <begin position="2"/>
        <end position="646"/>
    </location>
</feature>
<feature type="region of interest" description="Nucleotide-binding domain (NBD)" evidence="2">
    <location>
        <begin position="2"/>
        <end position="386"/>
    </location>
</feature>
<feature type="region of interest" description="Interaction with BAG1" evidence="1">
    <location>
        <begin position="186"/>
        <end position="377"/>
    </location>
</feature>
<feature type="region of interest" description="Substrate-binding domain (SBD)" evidence="2">
    <location>
        <begin position="394"/>
        <end position="509"/>
    </location>
</feature>
<feature type="region of interest" description="Disordered" evidence="6">
    <location>
        <begin position="614"/>
        <end position="646"/>
    </location>
</feature>
<feature type="compositionally biased region" description="Gly residues" evidence="6">
    <location>
        <begin position="616"/>
        <end position="632"/>
    </location>
</feature>
<feature type="binding site" evidence="1">
    <location>
        <begin position="12"/>
        <end position="15"/>
    </location>
    <ligand>
        <name>ATP</name>
        <dbReference type="ChEBI" id="CHEBI:30616"/>
    </ligand>
</feature>
<feature type="binding site" evidence="3">
    <location>
        <position position="14"/>
    </location>
    <ligand>
        <name>ADP</name>
        <dbReference type="ChEBI" id="CHEBI:456216"/>
    </ligand>
</feature>
<feature type="binding site" evidence="3">
    <location>
        <position position="15"/>
    </location>
    <ligand>
        <name>ADP</name>
        <dbReference type="ChEBI" id="CHEBI:456216"/>
    </ligand>
</feature>
<feature type="binding site" evidence="1">
    <location>
        <position position="71"/>
    </location>
    <ligand>
        <name>ATP</name>
        <dbReference type="ChEBI" id="CHEBI:30616"/>
    </ligand>
</feature>
<feature type="binding site" evidence="1">
    <location>
        <begin position="202"/>
        <end position="204"/>
    </location>
    <ligand>
        <name>ATP</name>
        <dbReference type="ChEBI" id="CHEBI:30616"/>
    </ligand>
</feature>
<feature type="binding site" evidence="3">
    <location>
        <position position="202"/>
    </location>
    <ligand>
        <name>ADP</name>
        <dbReference type="ChEBI" id="CHEBI:456216"/>
    </ligand>
</feature>
<feature type="binding site" evidence="1">
    <location>
        <begin position="268"/>
        <end position="275"/>
    </location>
    <ligand>
        <name>ATP</name>
        <dbReference type="ChEBI" id="CHEBI:30616"/>
    </ligand>
</feature>
<feature type="binding site" evidence="3">
    <location>
        <position position="268"/>
    </location>
    <ligand>
        <name>ADP</name>
        <dbReference type="ChEBI" id="CHEBI:456216"/>
    </ligand>
</feature>
<feature type="binding site" evidence="3">
    <location>
        <position position="271"/>
    </location>
    <ligand>
        <name>ADP</name>
        <dbReference type="ChEBI" id="CHEBI:456216"/>
    </ligand>
</feature>
<feature type="binding site" evidence="3">
    <location>
        <position position="275"/>
    </location>
    <ligand>
        <name>ADP</name>
        <dbReference type="ChEBI" id="CHEBI:456216"/>
    </ligand>
</feature>
<feature type="binding site" evidence="1">
    <location>
        <begin position="339"/>
        <end position="342"/>
    </location>
    <ligand>
        <name>ATP</name>
        <dbReference type="ChEBI" id="CHEBI:30616"/>
    </ligand>
</feature>
<feature type="binding site" evidence="3">
    <location>
        <position position="339"/>
    </location>
    <ligand>
        <name>ADP</name>
        <dbReference type="ChEBI" id="CHEBI:456216"/>
    </ligand>
</feature>
<feature type="modified residue" description="N-acetylserine" evidence="2">
    <location>
        <position position="2"/>
    </location>
</feature>
<feature type="modified residue" description="N6-acetyllysine" evidence="4">
    <location>
        <position position="108"/>
    </location>
</feature>
<feature type="modified residue" description="Phosphoserine" evidence="2">
    <location>
        <position position="153"/>
    </location>
</feature>
<feature type="modified residue" description="N6-acetyllysine" evidence="2">
    <location>
        <position position="246"/>
    </location>
</feature>
<feature type="modified residue" description="N6-acetyllysine; alternate" evidence="2">
    <location>
        <position position="319"/>
    </location>
</feature>
<feature type="modified residue" description="N6-succinyllysine; alternate" evidence="4">
    <location>
        <position position="319"/>
    </location>
</feature>
<feature type="modified residue" description="N6-acetyllysine" evidence="4">
    <location>
        <position position="328"/>
    </location>
</feature>
<feature type="modified residue" description="Phosphoserine" evidence="2">
    <location>
        <position position="329"/>
    </location>
</feature>
<feature type="modified residue" description="Phosphoserine" evidence="2">
    <location>
        <position position="362"/>
    </location>
</feature>
<feature type="modified residue" description="Omega-N-methylarginine" evidence="2">
    <location>
        <position position="469"/>
    </location>
</feature>
<feature type="modified residue" description="N6-acetyllysine; alternate" evidence="4">
    <location>
        <position position="512"/>
    </location>
</feature>
<feature type="modified residue" description="N6-succinyllysine; alternate" evidence="4">
    <location>
        <position position="512"/>
    </location>
</feature>
<feature type="modified residue" description="N6-acetyllysine" evidence="4">
    <location>
        <position position="524"/>
    </location>
</feature>
<feature type="modified residue" description="Phosphoserine" evidence="2">
    <location>
        <position position="541"/>
    </location>
</feature>
<feature type="modified residue" description="N6,N6,N6-trimethyllysine; by METTL21A; alternate" evidence="2">
    <location>
        <position position="561"/>
    </location>
</feature>
<feature type="modified residue" description="N6,N6-dimethyllysine; alternate" evidence="2">
    <location>
        <position position="561"/>
    </location>
</feature>
<feature type="modified residue" description="N6-acetyllysine" evidence="2">
    <location>
        <position position="589"/>
    </location>
</feature>
<feature type="modified residue" description="N6-acetyllysine" evidence="2">
    <location>
        <position position="597"/>
    </location>
</feature>
<feature type="modified residue" description="N6-acetyllysine" evidence="2">
    <location>
        <position position="601"/>
    </location>
</feature>
<feature type="cross-link" description="Glycyl lysine isopeptide (Lys-Gly) (interchain with G-Cter in SUMO1); alternate" evidence="2">
    <location>
        <position position="512"/>
    </location>
</feature>
<feature type="cross-link" description="Glycyl lysine isopeptide (Lys-Gly) (interchain with G-Cter in SUMO2); alternate" evidence="2">
    <location>
        <position position="512"/>
    </location>
</feature>
<feature type="sequence conflict" description="In Ref. 1; CAH93238." evidence="7" ref="1">
    <original>K</original>
    <variation>E</variation>
    <location>
        <position position="56"/>
    </location>
</feature>
<feature type="sequence conflict" description="In Ref. 1; CAH93238." evidence="7" ref="1">
    <original>A</original>
    <variation>T</variation>
    <location>
        <position position="125"/>
    </location>
</feature>
<feature type="sequence conflict" description="In Ref. 1; CAH93238." evidence="7" ref="1">
    <original>D</original>
    <variation>G</variation>
    <location>
        <position position="492"/>
    </location>
</feature>
<feature type="sequence conflict" description="In Ref. 1; CAI29634." evidence="7" ref="1">
    <original>S</original>
    <variation>P</variation>
    <location>
        <position position="537"/>
    </location>
</feature>
<sequence>MSKGPAVGIDLGTTYSCVGVFQHGKVEIIANDQGNRTTPSYVAFTDTERLIGDAAKNQVAMNPTNTVFDAKRLIGRRFDDAVVQSDMKHWPFMVVNDAGRPKVQVEYKGETKSFYPEEVSSMVLAKMKEIAEAYLGKTVTNAVVTVPAYFNDSQRQATKDAGTIAGLNVLRIINEPTAAAIAYGLDKKVGAERNVLIFDLGGGTFDVSILTIEDGIFEVKSTAGDTHLGGEDFDNRMVNHFIAEFKRKHKKDISENKRAVRRLRTACERAKRTLSSSTQASIEIDSLYEGIDFYTSITRARFEELNADLFRGTLDPVEKALRDAKLDKSQIHDIVLVGGSTRIPKIQKLLQDFFNGKELNKSINPDEAVAYGAAVQAAILSGDKSENVQDLLLLDVTPLSLGIETAGGVMTVLIKRNTTIPTKQTQTFTTYSDNQPGVLIQVYEGERAMTKDNNLLGKFELTGIPPAPRGVPQIEVTFDIDANGILNVSAVDKSTGKENKITITNDKGRLSKEDIERMVQEAEKYKAEDEKQRDKVSSKNSLESYAFNMKATVEDEKLQGKINDEDKQKILDKCNEIINWLDKNQTAEKEEFEHQQKELEKVCNPIITKLYQSAGGMPGGMPGGFPGGGAPPSGGASSGPTIEEVD</sequence>
<reference key="1">
    <citation type="submission" date="2004-11" db="EMBL/GenBank/DDBJ databases">
        <authorList>
            <consortium name="The German cDNA consortium"/>
        </authorList>
    </citation>
    <scope>NUCLEOTIDE SEQUENCE [LARGE SCALE MRNA]</scope>
    <source>
        <tissue>Brain cortex</tissue>
    </source>
</reference>
<dbReference type="EC" id="3.6.4.10" evidence="2"/>
<dbReference type="EMBL" id="CR861166">
    <property type="protein sequence ID" value="CAH93238.1"/>
    <property type="molecule type" value="mRNA"/>
</dbReference>
<dbReference type="EMBL" id="CR925990">
    <property type="protein sequence ID" value="CAI29634.1"/>
    <property type="molecule type" value="mRNA"/>
</dbReference>
<dbReference type="SMR" id="Q5NVM9"/>
<dbReference type="STRING" id="9601.ENSPPYP00000004564"/>
<dbReference type="eggNOG" id="KOG0101">
    <property type="taxonomic scope" value="Eukaryota"/>
</dbReference>
<dbReference type="InParanoid" id="Q5NVM9"/>
<dbReference type="Proteomes" id="UP000001595">
    <property type="component" value="Unplaced"/>
</dbReference>
<dbReference type="GO" id="GO:0005765">
    <property type="term" value="C:lysosomal membrane"/>
    <property type="evidence" value="ECO:0000250"/>
    <property type="project" value="UniProtKB"/>
</dbReference>
<dbReference type="GO" id="GO:0042470">
    <property type="term" value="C:melanosome"/>
    <property type="evidence" value="ECO:0007669"/>
    <property type="project" value="UniProtKB-SubCell"/>
</dbReference>
<dbReference type="GO" id="GO:0005730">
    <property type="term" value="C:nucleolus"/>
    <property type="evidence" value="ECO:0007669"/>
    <property type="project" value="UniProtKB-SubCell"/>
</dbReference>
<dbReference type="GO" id="GO:0005634">
    <property type="term" value="C:nucleus"/>
    <property type="evidence" value="ECO:0000250"/>
    <property type="project" value="UniProtKB"/>
</dbReference>
<dbReference type="GO" id="GO:0005886">
    <property type="term" value="C:plasma membrane"/>
    <property type="evidence" value="ECO:0007669"/>
    <property type="project" value="UniProtKB-SubCell"/>
</dbReference>
<dbReference type="GO" id="GO:0000974">
    <property type="term" value="C:Prp19 complex"/>
    <property type="evidence" value="ECO:0000250"/>
    <property type="project" value="UniProtKB"/>
</dbReference>
<dbReference type="GO" id="GO:1990904">
    <property type="term" value="C:ribonucleoprotein complex"/>
    <property type="evidence" value="ECO:0000250"/>
    <property type="project" value="UniProtKB"/>
</dbReference>
<dbReference type="GO" id="GO:0005681">
    <property type="term" value="C:spliceosomal complex"/>
    <property type="evidence" value="ECO:0007669"/>
    <property type="project" value="UniProtKB-KW"/>
</dbReference>
<dbReference type="GO" id="GO:0005524">
    <property type="term" value="F:ATP binding"/>
    <property type="evidence" value="ECO:0007669"/>
    <property type="project" value="UniProtKB-KW"/>
</dbReference>
<dbReference type="GO" id="GO:0140662">
    <property type="term" value="F:ATP-dependent protein folding chaperone"/>
    <property type="evidence" value="ECO:0007669"/>
    <property type="project" value="InterPro"/>
</dbReference>
<dbReference type="GO" id="GO:0016787">
    <property type="term" value="F:hydrolase activity"/>
    <property type="evidence" value="ECO:0007669"/>
    <property type="project" value="UniProtKB-KW"/>
</dbReference>
<dbReference type="GO" id="GO:0030674">
    <property type="term" value="F:protein-macromolecule adaptor activity"/>
    <property type="evidence" value="ECO:0000250"/>
    <property type="project" value="UniProtKB"/>
</dbReference>
<dbReference type="GO" id="GO:0072318">
    <property type="term" value="P:clathrin coat disassembly"/>
    <property type="evidence" value="ECO:0000314"/>
    <property type="project" value="UniProtKB"/>
</dbReference>
<dbReference type="GO" id="GO:0006397">
    <property type="term" value="P:mRNA processing"/>
    <property type="evidence" value="ECO:0007669"/>
    <property type="project" value="UniProtKB-KW"/>
</dbReference>
<dbReference type="GO" id="GO:0045892">
    <property type="term" value="P:negative regulation of DNA-templated transcription"/>
    <property type="evidence" value="ECO:0000250"/>
    <property type="project" value="UniProtKB"/>
</dbReference>
<dbReference type="GO" id="GO:0061740">
    <property type="term" value="P:protein targeting to lysosome involved in chaperone-mediated autophagy"/>
    <property type="evidence" value="ECO:0000250"/>
    <property type="project" value="UniProtKB"/>
</dbReference>
<dbReference type="GO" id="GO:0008380">
    <property type="term" value="P:RNA splicing"/>
    <property type="evidence" value="ECO:0007669"/>
    <property type="project" value="UniProtKB-KW"/>
</dbReference>
<dbReference type="CDD" id="cd10233">
    <property type="entry name" value="ASKHA_NBD_HSP70_HSPA1"/>
    <property type="match status" value="1"/>
</dbReference>
<dbReference type="FunFam" id="2.60.34.10:FF:000002">
    <property type="entry name" value="Heat shock 70 kDa"/>
    <property type="match status" value="1"/>
</dbReference>
<dbReference type="FunFam" id="3.30.420.40:FF:000172">
    <property type="entry name" value="Heat shock 70 kDa protein"/>
    <property type="match status" value="1"/>
</dbReference>
<dbReference type="FunFam" id="3.30.420.40:FF:000028">
    <property type="entry name" value="heat shock 70 kDa protein-like"/>
    <property type="match status" value="1"/>
</dbReference>
<dbReference type="FunFam" id="3.30.420.40:FF:000135">
    <property type="entry name" value="Heat shock cognate 71 kDa protein"/>
    <property type="match status" value="1"/>
</dbReference>
<dbReference type="FunFam" id="3.90.640.10:FF:000134">
    <property type="entry name" value="Heat shock cognate 71 kDa protein"/>
    <property type="match status" value="1"/>
</dbReference>
<dbReference type="FunFam" id="1.20.1270.10:FF:000003">
    <property type="entry name" value="heat shock cognate 71 kDa protein-like"/>
    <property type="match status" value="1"/>
</dbReference>
<dbReference type="FunFam" id="3.30.420.40:FF:000026">
    <property type="entry name" value="Heat shock protein 70"/>
    <property type="match status" value="1"/>
</dbReference>
<dbReference type="FunFam" id="3.30.30.30:FF:000025">
    <property type="entry name" value="Uncharacterized protein"/>
    <property type="match status" value="1"/>
</dbReference>
<dbReference type="Gene3D" id="1.20.1270.10">
    <property type="match status" value="1"/>
</dbReference>
<dbReference type="Gene3D" id="3.30.30.30">
    <property type="match status" value="1"/>
</dbReference>
<dbReference type="Gene3D" id="3.30.420.40">
    <property type="match status" value="2"/>
</dbReference>
<dbReference type="Gene3D" id="3.90.640.10">
    <property type="entry name" value="Actin, Chain A, domain 4"/>
    <property type="match status" value="1"/>
</dbReference>
<dbReference type="Gene3D" id="2.60.34.10">
    <property type="entry name" value="Substrate Binding Domain Of DNAk, Chain A, domain 1"/>
    <property type="match status" value="1"/>
</dbReference>
<dbReference type="InterPro" id="IPR043129">
    <property type="entry name" value="ATPase_NBD"/>
</dbReference>
<dbReference type="InterPro" id="IPR018181">
    <property type="entry name" value="Heat_shock_70_CS"/>
</dbReference>
<dbReference type="InterPro" id="IPR029048">
    <property type="entry name" value="HSP70_C_sf"/>
</dbReference>
<dbReference type="InterPro" id="IPR029047">
    <property type="entry name" value="HSP70_peptide-bd_sf"/>
</dbReference>
<dbReference type="InterPro" id="IPR013126">
    <property type="entry name" value="Hsp_70_fam"/>
</dbReference>
<dbReference type="NCBIfam" id="NF001413">
    <property type="entry name" value="PRK00290.1"/>
    <property type="match status" value="1"/>
</dbReference>
<dbReference type="PANTHER" id="PTHR19375">
    <property type="entry name" value="HEAT SHOCK PROTEIN 70KDA"/>
    <property type="match status" value="1"/>
</dbReference>
<dbReference type="Pfam" id="PF00012">
    <property type="entry name" value="HSP70"/>
    <property type="match status" value="1"/>
</dbReference>
<dbReference type="PRINTS" id="PR00301">
    <property type="entry name" value="HEATSHOCK70"/>
</dbReference>
<dbReference type="SUPFAM" id="SSF53067">
    <property type="entry name" value="Actin-like ATPase domain"/>
    <property type="match status" value="2"/>
</dbReference>
<dbReference type="SUPFAM" id="SSF100934">
    <property type="entry name" value="Heat shock protein 70kD (HSP70), C-terminal subdomain"/>
    <property type="match status" value="1"/>
</dbReference>
<dbReference type="SUPFAM" id="SSF100920">
    <property type="entry name" value="Heat shock protein 70kD (HSP70), peptide-binding domain"/>
    <property type="match status" value="1"/>
</dbReference>
<dbReference type="PROSITE" id="PS00297">
    <property type="entry name" value="HSP70_1"/>
    <property type="match status" value="1"/>
</dbReference>
<dbReference type="PROSITE" id="PS00329">
    <property type="entry name" value="HSP70_2"/>
    <property type="match status" value="1"/>
</dbReference>
<dbReference type="PROSITE" id="PS01036">
    <property type="entry name" value="HSP70_3"/>
    <property type="match status" value="1"/>
</dbReference>
<evidence type="ECO:0000250" key="1"/>
<evidence type="ECO:0000250" key="2">
    <source>
        <dbReference type="UniProtKB" id="P11142"/>
    </source>
</evidence>
<evidence type="ECO:0000250" key="3">
    <source>
        <dbReference type="UniProtKB" id="P19120"/>
    </source>
</evidence>
<evidence type="ECO:0000250" key="4">
    <source>
        <dbReference type="UniProtKB" id="P63017"/>
    </source>
</evidence>
<evidence type="ECO:0000250" key="5">
    <source>
        <dbReference type="UniProtKB" id="P63018"/>
    </source>
</evidence>
<evidence type="ECO:0000256" key="6">
    <source>
        <dbReference type="SAM" id="MobiDB-lite"/>
    </source>
</evidence>
<evidence type="ECO:0000305" key="7"/>